<dbReference type="EMBL" id="CP000440">
    <property type="protein sequence ID" value="ABI88772.1"/>
    <property type="molecule type" value="Genomic_DNA"/>
</dbReference>
<dbReference type="KEGG" id="bam:Bamb_3216"/>
<dbReference type="PATRIC" id="fig|339670.21.peg.1641"/>
<dbReference type="eggNOG" id="COG0759">
    <property type="taxonomic scope" value="Bacteria"/>
</dbReference>
<dbReference type="Proteomes" id="UP000000662">
    <property type="component" value="Chromosome 1"/>
</dbReference>
<dbReference type="GO" id="GO:0005886">
    <property type="term" value="C:plasma membrane"/>
    <property type="evidence" value="ECO:0007669"/>
    <property type="project" value="UniProtKB-SubCell"/>
</dbReference>
<dbReference type="HAMAP" id="MF_00386">
    <property type="entry name" value="UPF0161_YidD"/>
    <property type="match status" value="1"/>
</dbReference>
<dbReference type="InterPro" id="IPR002696">
    <property type="entry name" value="Membr_insert_effic_factor_YidD"/>
</dbReference>
<dbReference type="NCBIfam" id="TIGR00278">
    <property type="entry name" value="membrane protein insertion efficiency factor YidD"/>
    <property type="match status" value="1"/>
</dbReference>
<dbReference type="PANTHER" id="PTHR33383">
    <property type="entry name" value="MEMBRANE PROTEIN INSERTION EFFICIENCY FACTOR-RELATED"/>
    <property type="match status" value="1"/>
</dbReference>
<dbReference type="PANTHER" id="PTHR33383:SF1">
    <property type="entry name" value="MEMBRANE PROTEIN INSERTION EFFICIENCY FACTOR-RELATED"/>
    <property type="match status" value="1"/>
</dbReference>
<dbReference type="Pfam" id="PF01809">
    <property type="entry name" value="YidD"/>
    <property type="match status" value="1"/>
</dbReference>
<dbReference type="SMART" id="SM01234">
    <property type="entry name" value="Haemolytic"/>
    <property type="match status" value="1"/>
</dbReference>
<accession>Q0BAQ1</accession>
<sequence length="88" mass="9827">METVLIALLRFYKVAVSPMLGNRCRFYPSCSDYAREAIQYHGAARGTYLAVRRVCRCHPFSAGGIDLVPPPNSDTRARGEADARSHRL</sequence>
<evidence type="ECO:0000255" key="1">
    <source>
        <dbReference type="HAMAP-Rule" id="MF_00386"/>
    </source>
</evidence>
<evidence type="ECO:0000256" key="2">
    <source>
        <dbReference type="SAM" id="MobiDB-lite"/>
    </source>
</evidence>
<reference key="1">
    <citation type="submission" date="2006-08" db="EMBL/GenBank/DDBJ databases">
        <title>Complete sequence of chromosome 1 of Burkholderia cepacia AMMD.</title>
        <authorList>
            <person name="Copeland A."/>
            <person name="Lucas S."/>
            <person name="Lapidus A."/>
            <person name="Barry K."/>
            <person name="Detter J.C."/>
            <person name="Glavina del Rio T."/>
            <person name="Hammon N."/>
            <person name="Israni S."/>
            <person name="Pitluck S."/>
            <person name="Bruce D."/>
            <person name="Chain P."/>
            <person name="Malfatti S."/>
            <person name="Shin M."/>
            <person name="Vergez L."/>
            <person name="Schmutz J."/>
            <person name="Larimer F."/>
            <person name="Land M."/>
            <person name="Hauser L."/>
            <person name="Kyrpides N."/>
            <person name="Kim E."/>
            <person name="Parke J."/>
            <person name="Coenye T."/>
            <person name="Konstantinidis K."/>
            <person name="Ramette A."/>
            <person name="Tiedje J."/>
            <person name="Richardson P."/>
        </authorList>
    </citation>
    <scope>NUCLEOTIDE SEQUENCE [LARGE SCALE GENOMIC DNA]</scope>
    <source>
        <strain>ATCC BAA-244 / DSM 16087 / CCUG 44356 / LMG 19182 / AMMD</strain>
    </source>
</reference>
<proteinExistence type="inferred from homology"/>
<protein>
    <recommendedName>
        <fullName evidence="1">Putative membrane protein insertion efficiency factor</fullName>
    </recommendedName>
</protein>
<gene>
    <name type="ordered locus">Bamb_3216</name>
</gene>
<organism>
    <name type="scientific">Burkholderia ambifaria (strain ATCC BAA-244 / DSM 16087 / CCUG 44356 / LMG 19182 / AMMD)</name>
    <name type="common">Burkholderia cepacia (strain AMMD)</name>
    <dbReference type="NCBI Taxonomy" id="339670"/>
    <lineage>
        <taxon>Bacteria</taxon>
        <taxon>Pseudomonadati</taxon>
        <taxon>Pseudomonadota</taxon>
        <taxon>Betaproteobacteria</taxon>
        <taxon>Burkholderiales</taxon>
        <taxon>Burkholderiaceae</taxon>
        <taxon>Burkholderia</taxon>
        <taxon>Burkholderia cepacia complex</taxon>
    </lineage>
</organism>
<name>YIDD_BURCM</name>
<comment type="function">
    <text evidence="1">Could be involved in insertion of integral membrane proteins into the membrane.</text>
</comment>
<comment type="subcellular location">
    <subcellularLocation>
        <location evidence="1">Cell inner membrane</location>
        <topology evidence="1">Peripheral membrane protein</topology>
        <orientation evidence="1">Cytoplasmic side</orientation>
    </subcellularLocation>
</comment>
<comment type="similarity">
    <text evidence="1">Belongs to the UPF0161 family.</text>
</comment>
<feature type="chain" id="PRO_1000013069" description="Putative membrane protein insertion efficiency factor">
    <location>
        <begin position="1"/>
        <end position="88"/>
    </location>
</feature>
<feature type="region of interest" description="Disordered" evidence="2">
    <location>
        <begin position="68"/>
        <end position="88"/>
    </location>
</feature>
<feature type="compositionally biased region" description="Basic and acidic residues" evidence="2">
    <location>
        <begin position="75"/>
        <end position="88"/>
    </location>
</feature>
<keyword id="KW-0997">Cell inner membrane</keyword>
<keyword id="KW-1003">Cell membrane</keyword>
<keyword id="KW-0472">Membrane</keyword>